<reference key="1">
    <citation type="submission" date="2005-08" db="EMBL/GenBank/DDBJ databases">
        <title>Complete sequence of Pelodictyon luteolum DSM 273.</title>
        <authorList>
            <consortium name="US DOE Joint Genome Institute"/>
            <person name="Copeland A."/>
            <person name="Lucas S."/>
            <person name="Lapidus A."/>
            <person name="Barry K."/>
            <person name="Detter J.C."/>
            <person name="Glavina T."/>
            <person name="Hammon N."/>
            <person name="Israni S."/>
            <person name="Pitluck S."/>
            <person name="Bryant D."/>
            <person name="Schmutz J."/>
            <person name="Larimer F."/>
            <person name="Land M."/>
            <person name="Kyrpides N."/>
            <person name="Ivanova N."/>
            <person name="Richardson P."/>
        </authorList>
    </citation>
    <scope>NUCLEOTIDE SEQUENCE [LARGE SCALE GENOMIC DNA]</scope>
    <source>
        <strain>DSM 273 / BCRC 81028 / 2530</strain>
    </source>
</reference>
<feature type="chain" id="PRO_0000235113" description="4-diphosphocytidyl-2-C-methyl-D-erythritol kinase">
    <location>
        <begin position="1"/>
        <end position="287"/>
    </location>
</feature>
<feature type="active site" evidence="1">
    <location>
        <position position="11"/>
    </location>
</feature>
<feature type="active site" evidence="1">
    <location>
        <position position="135"/>
    </location>
</feature>
<feature type="binding site" evidence="1">
    <location>
        <begin position="93"/>
        <end position="103"/>
    </location>
    <ligand>
        <name>ATP</name>
        <dbReference type="ChEBI" id="CHEBI:30616"/>
    </ligand>
</feature>
<sequence length="287" mass="31023">MPSISVHAYAKINLGLFITGKRDDGYHNLETIFAPVSWHDTLCFSPADAISMRCTNADLPTDGSNLCIRAARSLQEYAGVGDGVSIELDKQVPFGAGLGGGSSDAATVLRVLNGFWNINATVEDLHPLAVKLGADVPYFLEMEGLAYAGGIGDELTDLHAGLPWHVVTVFPAEHISTAWAYGNFHRRFGQSRPDIRTIAADLSGIGDTGRLELFENDFQSAVFEQFPKVRRVHTDLLEAGAVFASLSGSGSAVYGLFETAMDARRAIERQRASYPTNLTPPGFSMRQ</sequence>
<comment type="function">
    <text evidence="1">Catalyzes the phosphorylation of the position 2 hydroxy group of 4-diphosphocytidyl-2C-methyl-D-erythritol.</text>
</comment>
<comment type="catalytic activity">
    <reaction evidence="1">
        <text>4-CDP-2-C-methyl-D-erythritol + ATP = 4-CDP-2-C-methyl-D-erythritol 2-phosphate + ADP + H(+)</text>
        <dbReference type="Rhea" id="RHEA:18437"/>
        <dbReference type="ChEBI" id="CHEBI:15378"/>
        <dbReference type="ChEBI" id="CHEBI:30616"/>
        <dbReference type="ChEBI" id="CHEBI:57823"/>
        <dbReference type="ChEBI" id="CHEBI:57919"/>
        <dbReference type="ChEBI" id="CHEBI:456216"/>
        <dbReference type="EC" id="2.7.1.148"/>
    </reaction>
</comment>
<comment type="pathway">
    <text evidence="1">Isoprenoid biosynthesis; isopentenyl diphosphate biosynthesis via DXP pathway; isopentenyl diphosphate from 1-deoxy-D-xylulose 5-phosphate: step 3/6.</text>
</comment>
<comment type="similarity">
    <text evidence="1">Belongs to the GHMP kinase family. IspE subfamily.</text>
</comment>
<proteinExistence type="inferred from homology"/>
<dbReference type="EC" id="2.7.1.148" evidence="1"/>
<dbReference type="EMBL" id="CP000096">
    <property type="protein sequence ID" value="ABB24355.1"/>
    <property type="molecule type" value="Genomic_DNA"/>
</dbReference>
<dbReference type="RefSeq" id="WP_011358227.1">
    <property type="nucleotide sequence ID" value="NC_007512.1"/>
</dbReference>
<dbReference type="SMR" id="Q3B2S6"/>
<dbReference type="STRING" id="319225.Plut_1496"/>
<dbReference type="KEGG" id="plt:Plut_1496"/>
<dbReference type="eggNOG" id="COG1947">
    <property type="taxonomic scope" value="Bacteria"/>
</dbReference>
<dbReference type="HOGENOM" id="CLU_053057_3_0_10"/>
<dbReference type="OrthoDB" id="9809438at2"/>
<dbReference type="UniPathway" id="UPA00056">
    <property type="reaction ID" value="UER00094"/>
</dbReference>
<dbReference type="Proteomes" id="UP000002709">
    <property type="component" value="Chromosome"/>
</dbReference>
<dbReference type="GO" id="GO:0050515">
    <property type="term" value="F:4-(cytidine 5'-diphospho)-2-C-methyl-D-erythritol kinase activity"/>
    <property type="evidence" value="ECO:0007669"/>
    <property type="project" value="UniProtKB-UniRule"/>
</dbReference>
<dbReference type="GO" id="GO:0005524">
    <property type="term" value="F:ATP binding"/>
    <property type="evidence" value="ECO:0007669"/>
    <property type="project" value="UniProtKB-UniRule"/>
</dbReference>
<dbReference type="GO" id="GO:0019288">
    <property type="term" value="P:isopentenyl diphosphate biosynthetic process, methylerythritol 4-phosphate pathway"/>
    <property type="evidence" value="ECO:0007669"/>
    <property type="project" value="UniProtKB-UniRule"/>
</dbReference>
<dbReference type="GO" id="GO:0016114">
    <property type="term" value="P:terpenoid biosynthetic process"/>
    <property type="evidence" value="ECO:0007669"/>
    <property type="project" value="InterPro"/>
</dbReference>
<dbReference type="Gene3D" id="3.30.230.10">
    <property type="match status" value="1"/>
</dbReference>
<dbReference type="Gene3D" id="3.30.70.890">
    <property type="entry name" value="GHMP kinase, C-terminal domain"/>
    <property type="match status" value="1"/>
</dbReference>
<dbReference type="HAMAP" id="MF_00061">
    <property type="entry name" value="IspE"/>
    <property type="match status" value="1"/>
</dbReference>
<dbReference type="InterPro" id="IPR013750">
    <property type="entry name" value="GHMP_kinase_C_dom"/>
</dbReference>
<dbReference type="InterPro" id="IPR036554">
    <property type="entry name" value="GHMP_kinase_C_sf"/>
</dbReference>
<dbReference type="InterPro" id="IPR006204">
    <property type="entry name" value="GHMP_kinase_N_dom"/>
</dbReference>
<dbReference type="InterPro" id="IPR004424">
    <property type="entry name" value="IspE"/>
</dbReference>
<dbReference type="InterPro" id="IPR020568">
    <property type="entry name" value="Ribosomal_Su5_D2-typ_SF"/>
</dbReference>
<dbReference type="InterPro" id="IPR014721">
    <property type="entry name" value="Ribsml_uS5_D2-typ_fold_subgr"/>
</dbReference>
<dbReference type="NCBIfam" id="TIGR00154">
    <property type="entry name" value="ispE"/>
    <property type="match status" value="1"/>
</dbReference>
<dbReference type="PANTHER" id="PTHR43527">
    <property type="entry name" value="4-DIPHOSPHOCYTIDYL-2-C-METHYL-D-ERYTHRITOL KINASE, CHLOROPLASTIC"/>
    <property type="match status" value="1"/>
</dbReference>
<dbReference type="PANTHER" id="PTHR43527:SF2">
    <property type="entry name" value="4-DIPHOSPHOCYTIDYL-2-C-METHYL-D-ERYTHRITOL KINASE, CHLOROPLASTIC"/>
    <property type="match status" value="1"/>
</dbReference>
<dbReference type="Pfam" id="PF08544">
    <property type="entry name" value="GHMP_kinases_C"/>
    <property type="match status" value="1"/>
</dbReference>
<dbReference type="Pfam" id="PF00288">
    <property type="entry name" value="GHMP_kinases_N"/>
    <property type="match status" value="1"/>
</dbReference>
<dbReference type="PIRSF" id="PIRSF010376">
    <property type="entry name" value="IspE"/>
    <property type="match status" value="1"/>
</dbReference>
<dbReference type="SUPFAM" id="SSF55060">
    <property type="entry name" value="GHMP Kinase, C-terminal domain"/>
    <property type="match status" value="1"/>
</dbReference>
<dbReference type="SUPFAM" id="SSF54211">
    <property type="entry name" value="Ribosomal protein S5 domain 2-like"/>
    <property type="match status" value="1"/>
</dbReference>
<evidence type="ECO:0000255" key="1">
    <source>
        <dbReference type="HAMAP-Rule" id="MF_00061"/>
    </source>
</evidence>
<accession>Q3B2S6</accession>
<organism>
    <name type="scientific">Chlorobium luteolum (strain DSM 273 / BCRC 81028 / 2530)</name>
    <name type="common">Pelodictyon luteolum</name>
    <dbReference type="NCBI Taxonomy" id="319225"/>
    <lineage>
        <taxon>Bacteria</taxon>
        <taxon>Pseudomonadati</taxon>
        <taxon>Chlorobiota</taxon>
        <taxon>Chlorobiia</taxon>
        <taxon>Chlorobiales</taxon>
        <taxon>Chlorobiaceae</taxon>
        <taxon>Chlorobium/Pelodictyon group</taxon>
        <taxon>Pelodictyon</taxon>
    </lineage>
</organism>
<protein>
    <recommendedName>
        <fullName evidence="1">4-diphosphocytidyl-2-C-methyl-D-erythritol kinase</fullName>
        <shortName evidence="1">CMK</shortName>
        <ecNumber evidence="1">2.7.1.148</ecNumber>
    </recommendedName>
    <alternativeName>
        <fullName evidence="1">4-(cytidine-5'-diphospho)-2-C-methyl-D-erythritol kinase</fullName>
    </alternativeName>
</protein>
<name>ISPE_CHLL3</name>
<gene>
    <name evidence="1" type="primary">ispE</name>
    <name type="ordered locus">Plut_1496</name>
</gene>
<keyword id="KW-0067">ATP-binding</keyword>
<keyword id="KW-0414">Isoprene biosynthesis</keyword>
<keyword id="KW-0418">Kinase</keyword>
<keyword id="KW-0547">Nucleotide-binding</keyword>
<keyword id="KW-1185">Reference proteome</keyword>
<keyword id="KW-0808">Transferase</keyword>